<feature type="signal peptide" evidence="2">
    <location>
        <begin position="1"/>
        <end position="21"/>
    </location>
</feature>
<feature type="chain" id="PRO_0000032017" description="Glycinin A1b subunit">
    <location>
        <begin position="22"/>
        <end position="296"/>
    </location>
</feature>
<feature type="chain" id="PRO_0000032018" description="Glycinin B2 subunit">
    <location>
        <begin position="297"/>
        <end position="476"/>
    </location>
</feature>
<feature type="propeptide" id="PRO_0000032019">
    <location>
        <begin position="477"/>
        <end position="481"/>
    </location>
</feature>
<feature type="domain" description="Cupin type-1 1" evidence="2">
    <location>
        <begin position="36"/>
        <end position="240"/>
    </location>
</feature>
<feature type="domain" description="Cupin type-1 2" evidence="2">
    <location>
        <begin position="309"/>
        <end position="458"/>
    </location>
</feature>
<feature type="region of interest" description="Disordered" evidence="3">
    <location>
        <begin position="193"/>
        <end position="218"/>
    </location>
</feature>
<feature type="region of interest" description="Disordered" evidence="3">
    <location>
        <begin position="245"/>
        <end position="294"/>
    </location>
</feature>
<feature type="short sequence motif" description="Vacuolar targeting signal" evidence="1">
    <location>
        <begin position="472"/>
        <end position="481"/>
    </location>
</feature>
<feature type="compositionally biased region" description="Low complexity" evidence="3">
    <location>
        <begin position="193"/>
        <end position="204"/>
    </location>
</feature>
<feature type="compositionally biased region" description="Basic and acidic residues" evidence="3">
    <location>
        <begin position="271"/>
        <end position="290"/>
    </location>
</feature>
<feature type="disulfide bond" evidence="1">
    <location>
        <begin position="31"/>
        <end position="64"/>
    </location>
</feature>
<feature type="disulfide bond" description="Interchain (between A and B chains)" evidence="1">
    <location>
        <begin position="107"/>
        <end position="303"/>
    </location>
</feature>
<feature type="splice variant" id="VSP_060144" description="In isoform 2.">
    <original>CTLN</original>
    <variation>YTLI</variation>
    <location>
        <begin position="72"/>
        <end position="75"/>
    </location>
</feature>
<feature type="sequence conflict" description="In Ref. 3; BAC55938/BAC55937." evidence="24" ref="3">
    <original>D</original>
    <variation>G</variation>
    <location>
        <position position="42"/>
    </location>
</feature>
<feature type="sequence conflict" description="In Ref. 3; BAC55938." evidence="24" ref="3">
    <original>S</original>
    <variation>N</variation>
    <location>
        <position position="97"/>
    </location>
</feature>
<feature type="sequence conflict" description="In Ref. 3; BAC55938." evidence="24" ref="3">
    <original>F</original>
    <variation>L</variation>
    <location>
        <position position="145"/>
    </location>
</feature>
<feature type="sequence conflict" description="In Ref. 3; BAC55938/BAC55937." evidence="24" ref="3">
    <original>P</original>
    <variation>L</variation>
    <location>
        <position position="156"/>
    </location>
</feature>
<feature type="sequence conflict" description="In Ref. 3; BAC55938." evidence="24" ref="3">
    <original>L</original>
    <variation>I</variation>
    <location>
        <position position="162"/>
    </location>
</feature>
<feature type="sequence conflict" description="In Ref. 3; BAC55938." evidence="24" ref="3">
    <original>FQ</original>
    <variation>LE</variation>
    <location>
        <begin position="168"/>
        <end position="169"/>
    </location>
</feature>
<feature type="sequence conflict" description="In Ref. 3; BAC55938." evidence="24" ref="3">
    <original>E</original>
    <variation>Q</variation>
    <location>
        <position position="186"/>
    </location>
</feature>
<feature type="sequence conflict" description="In Ref. 3; BAC55938." evidence="24" ref="3">
    <original>P</original>
    <variation>S</variation>
    <location>
        <position position="194"/>
    </location>
</feature>
<feature type="sequence conflict" description="In Ref. 3; BAC55938/BAC55937." evidence="24" ref="3">
    <original>I</original>
    <variation>M</variation>
    <location>
        <position position="219"/>
    </location>
</feature>
<feature type="sequence conflict" description="In Ref. 3; BAC55938." evidence="24" ref="3">
    <original>I</original>
    <variation>IV</variation>
    <location>
        <position position="238"/>
    </location>
</feature>
<feature type="sequence conflict" description="In Ref. 3; BAC55938." evidence="24" ref="3">
    <original>K</original>
    <variation>R</variation>
    <location>
        <position position="258"/>
    </location>
</feature>
<feature type="sequence conflict" description="In Ref. 3; BAC55938." evidence="24" ref="3">
    <original>QQ</original>
    <variation>RR</variation>
    <location>
        <begin position="271"/>
        <end position="272"/>
    </location>
</feature>
<feature type="sequence conflict" description="In Ref. 3; BAC55938." evidence="24" ref="3">
    <original>R</original>
    <variation>G</variation>
    <location>
        <position position="306"/>
    </location>
</feature>
<feature type="sequence conflict" description="In Ref. 3; BAC55938." evidence="24" ref="3">
    <original>I</original>
    <variation>T</variation>
    <location>
        <position position="399"/>
    </location>
</feature>
<sequence length="481" mass="54242">MAKLVLSLCFLLFSGCCFAFSFREQPQQNECQIQRLNALKPDNRIESEGGFIETWNPNNKPFQCAGVALSRCTLNRNALRRPSYTNAPQEIYIQQGSGIFGMIFPGCPSTFEEPQQKGQSSRPQDRHQKIYHFREGDLIAVPTGFAYWMYNNEDTPVVAVSLIDTNSFQNQLDQMPRRFYLAGNQEQEFLQYQPQKQQGGTQSQKGKRQQEEENEGGSILSGFAPEFLEHAFVVDRQIVRKLQGENEEEEKGAIVTVKGGLSVISPPTEEQQQRPEEEEKPDCDEKDKHCQSQSRNGIDETICTMRLRHNIGQTSSPDIFNPQAGSITTATSLDFPALSWLKLSAQFGSLRKNAMFVPHYNLNANSIIYALNGRALVQVVNCNGERVFDGELQEGQVLIVPQNFAVAARSQSDNFEYVSFKTNDRPSIGNLAGANSLLNALPEEVIQQTFNLRRQQARQVKNNNPFSFLVPPKESQRRVVA</sequence>
<keyword id="KW-0020">Allergen</keyword>
<keyword id="KW-0025">Alternative splicing</keyword>
<keyword id="KW-1015">Disulfide bond</keyword>
<keyword id="KW-0256">Endoplasmic reticulum</keyword>
<keyword id="KW-1185">Reference proteome</keyword>
<keyword id="KW-0708">Seed storage protein</keyword>
<keyword id="KW-0732">Signal</keyword>
<keyword id="KW-0758">Storage protein</keyword>
<keyword id="KW-0926">Vacuole</keyword>
<proteinExistence type="evidence at protein level"/>
<comment type="function">
    <text evidence="6 9 12 19">Glycinin is the major seed storage protein of soybean (PubMed:2485233). Glycinin basic peptides (GBPs), and, to a lower extent, glycinin exhibit antibacterial activity against Gram-negative and Gram-positive bacteria (e.g. L.monocytogenes, B.subtilis, E.coli and S.enteritidis) by forming pores and aggregating in transmembranes, leading to membrane permeability and, eventually, cell death (PubMed:22236762, PubMed:28590128, Ref.12).</text>
</comment>
<comment type="subunit">
    <text evidence="1">Hexamer; each subunit is composed of an acidic and a basic chain derived from a single precursor and linked by a disulfide bond.</text>
</comment>
<comment type="subcellular location">
    <subcellularLocation>
        <location evidence="1">Endoplasmic reticulum</location>
    </subcellularLocation>
    <subcellularLocation>
        <location evidence="1">Protein storage vacuole</location>
    </subcellularLocation>
    <text evidence="1">Hexamers are assembled in the endoplasmic reticulum and later sorted to the protein storage vacuoles.</text>
</comment>
<comment type="alternative products">
    <event type="alternative splicing"/>
    <isoform>
        <id>P11828-1</id>
        <name>1</name>
        <sequence type="displayed"/>
    </isoform>
    <isoform>
        <id>P11828-2</id>
        <name>2</name>
        <sequence type="described" ref="VSP_060144"/>
    </isoform>
</comment>
<comment type="tissue specificity">
    <text evidence="7">Confined to developing seeds.</text>
</comment>
<comment type="developmental stage">
    <text evidence="7">Progressive level increase from pod to full-size seed growth.</text>
</comment>
<comment type="PTM">
    <text evidence="13">During soybean germination, seed storage proteins are hydrolyzed by protease/26S proteasome.</text>
</comment>
<comment type="allergen">
    <text evidence="5 8 11 14 17 22">Causes an allergic reaction in human and animals (e.g. rats, mouse and piglets); the acidic subunit is particularly allergenic (PubMed:18996574, PubMed:23426933, PubMed:24499064). Binds to IgE of patients with severe allergic reactions (anaphylaxis) to soybean (PubMed:18996574). Allergy to soybean is most common for infants (usually appears at the age of three months) which frequently outgrow their soybean allergy by the age of two, but a severe soybean allergy can last a lifetime; various symptoms involve skin, gastrointestinal tract and respiratory tracts (PubMed:24499064). Damaged intestinal function in piglets is associated with glycinin-mediated perturbation of nuclear factor-kappa B (NF-kappaB), Jun N-terminal kinase (JNK) and p38 levels (PubMed:30139257). Juvenile Chinese mitten crabs (E.sinensis) supplemented with glycinin display impaired growth and altered intestinal health due to gut inflammation, reshaped community of gut microbiota and digestive dysfunction (PubMed:30300740). Ingredient processing methods to reduce soybean allergenicity but keeping its nutritional values have been developed, among them physical processing includes extrusion, high-pressure (&gt;300 MPa), heating (between 70 and 90 degrees Celsius), roasting, chemical processing includes ethanol extraction (55-76 percent between 70 and 80 degrees Celsius), in vitro glycation (e.g. with xylose at 55 degrees Celsius) and enzymatic hydrolysis with pepsin and trypsin, and biological processing includes fermentation with A.oryzae, S.cerevisiae, L.lactic subsplactis, B.subtilis, B.lactic and L.plantarum (PubMed:24499064, PubMed:27620509). Resistant to hydrolysis by papain, alcalase, and fungal protease (PubMed:24499064).</text>
</comment>
<comment type="biotechnology">
    <text evidence="4 6 10 12 13 15 16 18 19">Emulsification efficiency of glycinin is improved by degree-dependent glycation with soy soluble polysaccharide (SSPS) at 60 degrees Celsius in both the acidic (A) and basic (B) polypeptides as a result of subunit dissociation at the quaternary level (PubMed:30372068). Thermal treatment of soybean seed proteins leads to the aggregation of glycinin acidic and basic polypeptides (GAP and GBP, respectively) (PubMed:10867183, PubMed:25801436). GBP improve sensory properties of meat (e.g. pork) during chilled storage and inhibit bacterial growth (e.g. L.monocytogenes, B.subtilis, E.coli and S.enteritidis) (PubMed:22236762, PubMed:30263339). Antibacterial properties of the GBP antimicrobial peptides (AMPs) associated with no cytotoxicity on the viability of human embryonic kidney cells make them promising candidates as natural antibacterial agents (PubMed:22236762, PubMed:28590128, Ref.12). Fragmented peptides resulting from gastrointestinal digestion of germinated soybeans seem to have anticancer and anti-inflammatory actions on human colon cancer cells (e.g. Caco-2, HT-29, and HCT-116) and macrophages (LPS-stimulated RAW 264.7) (PubMed:29037738). Such peptides resulting from digested germinated soybeans exhibit also anti-diabetic potential by inhibiting dipeptidyl peptidase IV (DPP-IV), salivary alpha-amylase and intestinal alpha-glucosidase enzymes (PubMed:30249015).</text>
</comment>
<comment type="similarity">
    <text evidence="24">Belongs to the 11S seed storage protein (globulins) family.</text>
</comment>
<evidence type="ECO:0000250" key="1">
    <source>
        <dbReference type="UniProtKB" id="P04776"/>
    </source>
</evidence>
<evidence type="ECO:0000255" key="2"/>
<evidence type="ECO:0000256" key="3">
    <source>
        <dbReference type="SAM" id="MobiDB-lite"/>
    </source>
</evidence>
<evidence type="ECO:0000269" key="4">
    <source>
    </source>
</evidence>
<evidence type="ECO:0000269" key="5">
    <source>
    </source>
</evidence>
<evidence type="ECO:0000269" key="6">
    <source>
    </source>
</evidence>
<evidence type="ECO:0000269" key="7">
    <source>
    </source>
</evidence>
<evidence type="ECO:0000269" key="8">
    <source>
    </source>
</evidence>
<evidence type="ECO:0000269" key="9">
    <source>
    </source>
</evidence>
<evidence type="ECO:0000269" key="10">
    <source>
    </source>
</evidence>
<evidence type="ECO:0000269" key="11">
    <source>
    </source>
</evidence>
<evidence type="ECO:0000269" key="12">
    <source>
    </source>
</evidence>
<evidence type="ECO:0000269" key="13">
    <source>
    </source>
</evidence>
<evidence type="ECO:0000269" key="14">
    <source>
    </source>
</evidence>
<evidence type="ECO:0000269" key="15">
    <source>
    </source>
</evidence>
<evidence type="ECO:0000269" key="16">
    <source>
    </source>
</evidence>
<evidence type="ECO:0000269" key="17">
    <source>
    </source>
</evidence>
<evidence type="ECO:0000269" key="18">
    <source>
    </source>
</evidence>
<evidence type="ECO:0000269" key="19">
    <source ref="12"/>
</evidence>
<evidence type="ECO:0000303" key="20">
    <source>
    </source>
</evidence>
<evidence type="ECO:0000303" key="21">
    <source>
    </source>
</evidence>
<evidence type="ECO:0000303" key="22">
    <source>
    </source>
</evidence>
<evidence type="ECO:0000303" key="23">
    <source>
    </source>
</evidence>
<evidence type="ECO:0000305" key="24"/>
<organism>
    <name type="scientific">Glycine max</name>
    <name type="common">Soybean</name>
    <name type="synonym">Glycine hispida</name>
    <dbReference type="NCBI Taxonomy" id="3847"/>
    <lineage>
        <taxon>Eukaryota</taxon>
        <taxon>Viridiplantae</taxon>
        <taxon>Streptophyta</taxon>
        <taxon>Embryophyta</taxon>
        <taxon>Tracheophyta</taxon>
        <taxon>Spermatophyta</taxon>
        <taxon>Magnoliopsida</taxon>
        <taxon>eudicotyledons</taxon>
        <taxon>Gunneridae</taxon>
        <taxon>Pentapetalae</taxon>
        <taxon>rosids</taxon>
        <taxon>fabids</taxon>
        <taxon>Fabales</taxon>
        <taxon>Fabaceae</taxon>
        <taxon>Papilionoideae</taxon>
        <taxon>50 kb inversion clade</taxon>
        <taxon>NPAAA clade</taxon>
        <taxon>indigoferoid/millettioid clade</taxon>
        <taxon>Phaseoleae</taxon>
        <taxon>Glycine</taxon>
        <taxon>Glycine subgen. Soja</taxon>
    </lineage>
</organism>
<accession>P11828</accession>
<accession>Q852U4</accession>
<accession>Q852U5</accession>
<protein>
    <recommendedName>
        <fullName evidence="20 23">Glycinin G3</fullName>
        <shortName evidence="24">Glycinin 11S G3</shortName>
        <shortName evidence="21">Glycinin A1bB2</shortName>
    </recommendedName>
    <allergenName evidence="24">Gly m 6</allergenName>
    <component>
        <recommendedName>
            <fullName evidence="21">Glycinin A1b subunit</fullName>
        </recommendedName>
        <alternativeName>
            <fullName>Glycinin A subunit</fullName>
        </alternativeName>
    </component>
    <component>
        <recommendedName>
            <fullName evidence="21">Glycinin B2 subunit</fullName>
        </recommendedName>
        <alternativeName>
            <fullName>Glycinin B subunit</fullName>
        </alternativeName>
    </component>
</protein>
<reference key="1">
    <citation type="journal article" date="1989" name="Nucleic Acids Res.">
        <title>The glycinin Gy3 gene from soybean.</title>
        <authorList>
            <person name="Cho T.-J."/>
            <person name="Nielsen N.C."/>
        </authorList>
    </citation>
    <scope>NUCLEOTIDE SEQUENCE [GENOMIC DNA]</scope>
    <source>
        <strain>cv. Dare</strain>
        <tissue>Leaf</tissue>
    </source>
</reference>
<reference key="2">
    <citation type="journal article" date="1989" name="Plant Cell">
        <title>Characterization of the glycinin gene family in soybean.</title>
        <authorList>
            <person name="Nielsen N.C."/>
            <person name="Dickinson C.D."/>
            <person name="Cho T.-J."/>
            <person name="Thanh V.H."/>
            <person name="Scallon B.J."/>
            <person name="Fischer R.L."/>
            <person name="Sims T.L."/>
            <person name="Drews G.N."/>
            <person name="Goldberg R.B."/>
        </authorList>
    </citation>
    <scope>DISCUSSION OF SEQUENCE</scope>
    <scope>FUNCTION</scope>
    <scope>GENE FAMILY</scope>
</reference>
<reference key="3">
    <citation type="submission" date="1999-07" db="EMBL/GenBank/DDBJ databases">
        <title>Cloning of two type glycinin A1bB2 from soybean (Glycine max L. Merril. ver. Matsuura).</title>
        <authorList>
            <person name="Fukazawa C."/>
        </authorList>
    </citation>
    <scope>NUCLEOTIDE SEQUENCE [MRNA] (ISOFORMS 1 AND 2)</scope>
    <source>
        <strain>cv. Matsuura</strain>
        <tissue>Seed</tissue>
    </source>
</reference>
<reference key="4">
    <citation type="journal article" date="2000" name="J. Biotechnol.">
        <title>The effect of pH on heat denaturation and gel forming properties of soy proteins.</title>
        <authorList>
            <person name="Renkema J.M."/>
            <person name="Lakemond C.M."/>
            <person name="de Jongh H.H."/>
            <person name="Gruppen H."/>
            <person name="van Vliet T."/>
        </authorList>
    </citation>
    <scope>BIOTECHNOLOGY</scope>
</reference>
<reference key="5">
    <citation type="journal article" date="2007" name="Plant Physiol. Biochem.">
        <title>Proteomic and genetic analysis of glycinin subunits of sixteen soybean genotypes.</title>
        <authorList>
            <person name="Natarajan S."/>
            <person name="Xu C."/>
            <person name="Bae H."/>
            <person name="Bailey B.A."/>
            <person name="Cregan P."/>
            <person name="Caperna T.J."/>
            <person name="Garrett W.M."/>
            <person name="Luthria D."/>
        </authorList>
    </citation>
    <scope>POLYMORPHISM</scope>
    <scope>IDENTIFICATION BY MASS SPECTROMETRY</scope>
</reference>
<reference key="6">
    <citation type="journal article" date="2009" name="J. Allergy Clin. Immunol.">
        <title>Soybean (Glycine max) allergy in Europe: Gly m 5 (beta-conglycinin) and Gly m 6 (glycinin) are potential diagnostic markers for severe allergic reactions to soy.</title>
        <authorList>
            <person name="Holzhauser T."/>
            <person name="Wackermann O."/>
            <person name="Ballmer-Weber B.K."/>
            <person name="Bindslev-Jensen C."/>
            <person name="Scibilia J."/>
            <person name="Perono-Garoffo L."/>
            <person name="Utsumi S."/>
            <person name="Poulsen L.K."/>
            <person name="Vieths S."/>
        </authorList>
    </citation>
    <scope>ALLERGEN</scope>
</reference>
<reference key="7">
    <citation type="journal article" date="2012" name="Int. J. Food Microbiol.">
        <title>In vitro and in situ antimicrobial action and mechanism of glycinin and its basic subunit.</title>
        <authorList>
            <person name="Sitohy M.Z."/>
            <person name="Mahgoub S.A."/>
            <person name="Osman A.O."/>
        </authorList>
    </citation>
    <scope>FUNCTION</scope>
    <scope>BIOTECHNOLOGY</scope>
</reference>
<reference key="8">
    <citation type="journal article" date="2012" name="Plant Physiol. Biochem.">
        <title>Global gene expression profiles in developing soybean seeds.</title>
        <authorList>
            <person name="Asakura T."/>
            <person name="Tamura T."/>
            <person name="Terauchi K."/>
            <person name="Narikawa T."/>
            <person name="Yagasaki K."/>
            <person name="Ishimaru Y."/>
            <person name="Abe K."/>
        </authorList>
    </citation>
    <scope>TISSUE SPECIFICITY</scope>
    <scope>DEVELOPMENTAL STAGE</scope>
</reference>
<reference key="9">
    <citation type="journal article" date="2013" name="Acta Crystallogr. F">
        <title>Purification, crystallization and preliminary crystallographic analysis of soybean mature glycinin A1bB2.</title>
        <authorList>
            <person name="Prak K."/>
            <person name="Mikami B."/>
            <person name="Itoh T."/>
            <person name="Fukuda T."/>
            <person name="Maruyama N."/>
            <person name="Utsumi S."/>
        </authorList>
    </citation>
    <scope>GENE FAMILY</scope>
    <scope>NOMENCLATURE</scope>
</reference>
<reference key="10">
    <citation type="journal article" date="2013" name="J. Sci. Food Agric.">
        <title>Epitopes from two soybean glycinin subunits are antigenic in pigs.</title>
        <authorList>
            <person name="Taliercio E."/>
            <person name="Kim S.W."/>
        </authorList>
    </citation>
    <scope>ALLERGEN</scope>
</reference>
<reference key="11">
    <citation type="journal article" date="2014" name="Crit. Rev. Food Sci. Nutr.">
        <title>Advances of research on glycinin and beta-conglycinin: a review of two major soybean allergenic proteins.</title>
        <authorList>
            <person name="Wang T."/>
            <person name="Qin G.-X."/>
            <person name="Sun Z.-W."/>
            <person name="Zhao Y."/>
        </authorList>
    </citation>
    <scope>ALLERGEN</scope>
    <scope>REVIEW</scope>
</reference>
<reference key="12">
    <citation type="journal article" date="2015" name="Innovative Food Sci. Emerg. Technol.">
        <title>Antibacterial activities and membrane permeability actions of glycinin basic peptide against Escherichia coli.</title>
        <authorList>
            <person name="Li Y.-Q."/>
            <person name="Sun X.-X."/>
            <person name="Feng J.-L."/>
            <person name="Mo H.-Z."/>
        </authorList>
    </citation>
    <scope>FUNCTION</scope>
    <scope>BIOTECHNOLOGY</scope>
</reference>
<reference key="13">
    <citation type="journal article" date="2016" name="Food Sci. Biotechnol.">
        <title>Effects of glycinin basic polypeptide on sensory and physicochemical properties of chilled pork.</title>
        <authorList>
            <person name="Li Y.-Q."/>
            <person name="Hao M."/>
            <person name="Yang J."/>
            <person name="Mo H.-Z."/>
        </authorList>
    </citation>
    <scope>BIOTECHNOLOGY</scope>
</reference>
<reference key="14">
    <citation type="journal article" date="2016" name="J. Sci. Food Agric.">
        <title>Thermal aggregation behaviour of soy protein: characteristics of different polypeptides and sub-units.</title>
        <authorList>
            <person name="He X.-T."/>
            <person name="Yuan D.-B."/>
            <person name="Wang J.-M."/>
            <person name="Yang X.-Q."/>
        </authorList>
    </citation>
    <scope>BIOTECHNOLOGY</scope>
</reference>
<reference key="15">
    <citation type="journal article" date="2017" name="J. Agric. Food Chem.">
        <title>Antibacterial actions of glycinin basic peptide against Escherichia coli.</title>
        <authorList>
            <person name="Zhao G.-P."/>
            <person name="Li Y.-Q."/>
            <person name="Sun G.-J."/>
            <person name="Mo H.-Z."/>
        </authorList>
    </citation>
    <scope>FUNCTION</scope>
    <scope>BIOTECHNOLOGY</scope>
</reference>
<reference key="16">
    <citation type="journal article" date="2017" name="J. Sci. Food Agric.">
        <title>The structural properties and antigenicity of soybean glycinin by glycation with xylose.</title>
        <authorList>
            <person name="Bu G."/>
            <person name="Zhu T."/>
            <person name="Chen F."/>
        </authorList>
    </citation>
    <scope>ALLERGEN</scope>
</reference>
<reference key="17">
    <citation type="journal article" date="2018" name="Food Chem.">
        <title>Peptides derived from in vitro gastrointestinal digestion of germinated soybean proteins inhibit human colon cancer cells proliferation and inflammation.</title>
        <authorList>
            <person name="Gonzalez-Montoya M."/>
            <person name="Hernandez-Ledesma B."/>
            <person name="Silvan J.M."/>
            <person name="Mora-Escobedo R."/>
            <person name="Martinez-Villaluenga C."/>
        </authorList>
    </citation>
    <scope>PTM</scope>
    <scope>BIOTECHNOLOGY</scope>
    <scope>IDENTIFICATION BY MASS SPECTROMETRY</scope>
</reference>
<reference key="18">
    <citation type="journal article" date="2018" name="Int. J. Mol. Sci.">
        <title>Bioactive peptides from germinated soybean with anti-diabetic potential by inhibition of dipeptidyl peptidase-IV, alpha-amylase, and alpha-glucosidase enzymes.</title>
        <authorList>
            <person name="Gonzalez-Montoya M."/>
            <person name="Hernandez-Ledesma B."/>
            <person name="Mora-Escobedo R."/>
            <person name="Martinez-Villaluenga C."/>
        </authorList>
    </citation>
    <scope>BIOTECHNOLOGY</scope>
    <scope>IDENTIFICATION BY MASS SPECTROMETRY</scope>
</reference>
<reference key="19">
    <citation type="journal article" date="2018" name="J. Agric. Food Chem.">
        <title>Soybean Glycinin- and beta-Conglycinin-Induced Intestinal Damage in Piglets via the p38/JNK/NF-kappaB Signaling Pathway.</title>
        <authorList>
            <person name="Peng C."/>
            <person name="Cao C."/>
            <person name="He M."/>
            <person name="Shu Y."/>
            <person name="Tang X."/>
            <person name="Wang Y."/>
            <person name="Zhang Y."/>
            <person name="Xia X."/>
            <person name="Li Y."/>
            <person name="Wu J."/>
        </authorList>
    </citation>
    <scope>ALLERGEN</scope>
</reference>
<reference key="20">
    <citation type="journal article" date="2018" name="J. Agric. Food Chem.">
        <title>Molecular Mechanism for Improving Emulsification Efficiency of Soy Glycinin by Glycation with Soy Soluble Polysaccharide.</title>
        <authorList>
            <person name="Peng X.Q."/>
            <person name="Xu Y.T."/>
            <person name="Liu T.X."/>
            <person name="Tang C.H."/>
        </authorList>
    </citation>
    <scope>BIOTECHNOLOGY</scope>
</reference>
<reference key="21">
    <citation type="journal article" date="2019" name="Fish Shellfish Immunol.">
        <title>Effects of glycinin and beta-conglycinin on growth performance and intestinal health in juvenile Chinese mitten crabs (Eriocheir sinensis).</title>
        <authorList>
            <person name="Han F."/>
            <person name="Wang X."/>
            <person name="Guo J."/>
            <person name="Qi C."/>
            <person name="Xu C."/>
            <person name="Luo Y."/>
            <person name="Li E."/>
            <person name="Qin J.G."/>
            <person name="Chen L."/>
        </authorList>
    </citation>
    <scope>ALLERGEN</scope>
</reference>
<dbReference type="EMBL" id="X15123">
    <property type="protein sequence ID" value="CAA33217.1"/>
    <property type="molecule type" value="Genomic_DNA"/>
</dbReference>
<dbReference type="EMBL" id="AB030494">
    <property type="protein sequence ID" value="BAC55937.1"/>
    <property type="molecule type" value="mRNA"/>
</dbReference>
<dbReference type="EMBL" id="AB030495">
    <property type="protein sequence ID" value="BAC55938.1"/>
    <property type="molecule type" value="mRNA"/>
</dbReference>
<dbReference type="PIR" id="S04605">
    <property type="entry name" value="S04605"/>
</dbReference>
<dbReference type="RefSeq" id="NP_001236840.2">
    <molecule id="P11828-1"/>
    <property type="nucleotide sequence ID" value="NM_001249911.2"/>
</dbReference>
<dbReference type="RefSeq" id="XP_040868361.1">
    <molecule id="P11828-1"/>
    <property type="nucleotide sequence ID" value="XM_041012427.1"/>
</dbReference>
<dbReference type="SMR" id="P11828"/>
<dbReference type="FunCoup" id="P11828">
    <property type="interactions" value="742"/>
</dbReference>
<dbReference type="STRING" id="3847.P11828"/>
<dbReference type="Allergome" id="5821">
    <property type="allergen name" value="Gly m 6"/>
</dbReference>
<dbReference type="Allergome" id="5824">
    <property type="allergen name" value="Gly m 6.0301"/>
</dbReference>
<dbReference type="PaxDb" id="3847-GLYMA19G34780.1"/>
<dbReference type="EnsemblPlants" id="KRG95667">
    <molecule id="P11828-1"/>
    <property type="protein sequence ID" value="KRG95667"/>
    <property type="gene ID" value="GLYMA_19G164900"/>
</dbReference>
<dbReference type="GeneID" id="547463"/>
<dbReference type="Gramene" id="KRG95667">
    <molecule id="P11828-1"/>
    <property type="protein sequence ID" value="KRG95667"/>
    <property type="gene ID" value="GLYMA_19G164900"/>
</dbReference>
<dbReference type="KEGG" id="gmx:547463"/>
<dbReference type="eggNOG" id="ENOG502QU1J">
    <property type="taxonomic scope" value="Eukaryota"/>
</dbReference>
<dbReference type="HOGENOM" id="CLU_026341_2_0_1"/>
<dbReference type="InParanoid" id="P11828"/>
<dbReference type="OMA" id="AHWIYNT"/>
<dbReference type="OrthoDB" id="1389300at2759"/>
<dbReference type="Proteomes" id="UP000008827">
    <property type="component" value="Chromosome 19"/>
</dbReference>
<dbReference type="GO" id="GO:0005783">
    <property type="term" value="C:endoplasmic reticulum"/>
    <property type="evidence" value="ECO:0000250"/>
    <property type="project" value="UniProtKB"/>
</dbReference>
<dbReference type="GO" id="GO:0000326">
    <property type="term" value="C:protein storage vacuole"/>
    <property type="evidence" value="ECO:0000250"/>
    <property type="project" value="UniProtKB"/>
</dbReference>
<dbReference type="GO" id="GO:0045735">
    <property type="term" value="F:nutrient reservoir activity"/>
    <property type="evidence" value="ECO:0007669"/>
    <property type="project" value="UniProtKB-KW"/>
</dbReference>
<dbReference type="CDD" id="cd02243">
    <property type="entry name" value="cupin_11S_legumin_C"/>
    <property type="match status" value="1"/>
</dbReference>
<dbReference type="CDD" id="cd02242">
    <property type="entry name" value="cupin_11S_legumin_N"/>
    <property type="match status" value="1"/>
</dbReference>
<dbReference type="FunFam" id="2.60.120.10:FF:000073">
    <property type="entry name" value="Glycinin G1"/>
    <property type="match status" value="1"/>
</dbReference>
<dbReference type="FunFam" id="2.60.120.10:FF:000124">
    <property type="entry name" value="Glycinin G5"/>
    <property type="match status" value="1"/>
</dbReference>
<dbReference type="Gene3D" id="2.60.120.10">
    <property type="entry name" value="Jelly Rolls"/>
    <property type="match status" value="2"/>
</dbReference>
<dbReference type="InterPro" id="IPR022379">
    <property type="entry name" value="11S_seedstore_CS"/>
</dbReference>
<dbReference type="InterPro" id="IPR006044">
    <property type="entry name" value="11S_seedstore_pln"/>
</dbReference>
<dbReference type="InterPro" id="IPR006045">
    <property type="entry name" value="Cupin_1"/>
</dbReference>
<dbReference type="InterPro" id="IPR014710">
    <property type="entry name" value="RmlC-like_jellyroll"/>
</dbReference>
<dbReference type="InterPro" id="IPR011051">
    <property type="entry name" value="RmlC_Cupin_sf"/>
</dbReference>
<dbReference type="InterPro" id="IPR050253">
    <property type="entry name" value="Seed_Storage-Functional"/>
</dbReference>
<dbReference type="PANTHER" id="PTHR31189:SF77">
    <property type="entry name" value="GLYCININ G3"/>
    <property type="match status" value="1"/>
</dbReference>
<dbReference type="PANTHER" id="PTHR31189">
    <property type="entry name" value="OS03G0336100 PROTEIN-RELATED"/>
    <property type="match status" value="1"/>
</dbReference>
<dbReference type="Pfam" id="PF00190">
    <property type="entry name" value="Cupin_1"/>
    <property type="match status" value="2"/>
</dbReference>
<dbReference type="PRINTS" id="PR00439">
    <property type="entry name" value="11SGLOBULIN"/>
</dbReference>
<dbReference type="SMART" id="SM00835">
    <property type="entry name" value="Cupin_1"/>
    <property type="match status" value="2"/>
</dbReference>
<dbReference type="SUPFAM" id="SSF51182">
    <property type="entry name" value="RmlC-like cupins"/>
    <property type="match status" value="1"/>
</dbReference>
<dbReference type="PROSITE" id="PS00305">
    <property type="entry name" value="11S_SEED_STORAGE"/>
    <property type="match status" value="1"/>
</dbReference>
<name>GLYG3_SOYBN</name>
<gene>
    <name evidence="23" type="primary">GY3</name>
    <name evidence="24" type="ordered locus">Glyma19g34780</name>
</gene>